<evidence type="ECO:0000255" key="1">
    <source>
        <dbReference type="HAMAP-Rule" id="MF_00378"/>
    </source>
</evidence>
<feature type="chain" id="PRO_1000205680" description="Exodeoxyribonuclease 7 large subunit">
    <location>
        <begin position="1"/>
        <end position="459"/>
    </location>
</feature>
<organism>
    <name type="scientific">Pseudomonas fluorescens (strain SBW25)</name>
    <dbReference type="NCBI Taxonomy" id="216595"/>
    <lineage>
        <taxon>Bacteria</taxon>
        <taxon>Pseudomonadati</taxon>
        <taxon>Pseudomonadota</taxon>
        <taxon>Gammaproteobacteria</taxon>
        <taxon>Pseudomonadales</taxon>
        <taxon>Pseudomonadaceae</taxon>
        <taxon>Pseudomonas</taxon>
    </lineage>
</organism>
<comment type="function">
    <text evidence="1">Bidirectionally degrades single-stranded DNA into large acid-insoluble oligonucleotides, which are then degraded further into small acid-soluble oligonucleotides.</text>
</comment>
<comment type="catalytic activity">
    <reaction evidence="1">
        <text>Exonucleolytic cleavage in either 5'- to 3'- or 3'- to 5'-direction to yield nucleoside 5'-phosphates.</text>
        <dbReference type="EC" id="3.1.11.6"/>
    </reaction>
</comment>
<comment type="subunit">
    <text evidence="1">Heterooligomer composed of large and small subunits.</text>
</comment>
<comment type="subcellular location">
    <subcellularLocation>
        <location evidence="1">Cytoplasm</location>
    </subcellularLocation>
</comment>
<comment type="similarity">
    <text evidence="1">Belongs to the XseA family.</text>
</comment>
<sequence length="459" mass="51134">MIKDPFARLGLDREILTVSQLNGRARVLLEDVFTNIWVEGEISNLARPASGHVYFTLKDSGAQVRCALFRNNAARVRQALKDGLAVKVRGKVSLFEGRGDYQLILDTVEPAGDGALRLAFDALKEKLSAEGLFSAERKVPLPAHPRRIGIISSPTGAVIRDIISVFRRRAPNIELTLIPTAVQGREAIPQIVRALKLADARGFDALILARGGGSLEDLWCFNEEAVARAVDACITPIVSAVGHETDVSISDFVADVRAPTPSAAAELLAPDASHLVRQVENLHRRLVMLMRNRLSHDRLRLEGMARRLRHPGERLRQQAQRLDDLDMRLRRAFERSLNTRRERLIRLETRLAGQHPGRQLALLRQRLESLAERLPRAMREGLKARRLQLQSQVQTLHVVSPLATLGRGYSILLDERGQAIRTAAQTHTGQRLTARLGEGQLQVRVEDNHLTPVTLSLLD</sequence>
<protein>
    <recommendedName>
        <fullName evidence="1">Exodeoxyribonuclease 7 large subunit</fullName>
        <ecNumber evidence="1">3.1.11.6</ecNumber>
    </recommendedName>
    <alternativeName>
        <fullName evidence="1">Exodeoxyribonuclease VII large subunit</fullName>
        <shortName evidence="1">Exonuclease VII large subunit</shortName>
    </alternativeName>
</protein>
<accession>C3K1K5</accession>
<dbReference type="EC" id="3.1.11.6" evidence="1"/>
<dbReference type="EMBL" id="AM181176">
    <property type="protein sequence ID" value="CAY52033.1"/>
    <property type="molecule type" value="Genomic_DNA"/>
</dbReference>
<dbReference type="RefSeq" id="WP_015885730.1">
    <property type="nucleotide sequence ID" value="NC_012660.1"/>
</dbReference>
<dbReference type="SMR" id="C3K1K5"/>
<dbReference type="STRING" id="294.SRM1_04636"/>
<dbReference type="PATRIC" id="fig|216595.4.peg.5183"/>
<dbReference type="eggNOG" id="COG1570">
    <property type="taxonomic scope" value="Bacteria"/>
</dbReference>
<dbReference type="HOGENOM" id="CLU_023625_3_1_6"/>
<dbReference type="OrthoDB" id="9802795at2"/>
<dbReference type="GO" id="GO:0005737">
    <property type="term" value="C:cytoplasm"/>
    <property type="evidence" value="ECO:0007669"/>
    <property type="project" value="UniProtKB-SubCell"/>
</dbReference>
<dbReference type="GO" id="GO:0009318">
    <property type="term" value="C:exodeoxyribonuclease VII complex"/>
    <property type="evidence" value="ECO:0007669"/>
    <property type="project" value="InterPro"/>
</dbReference>
<dbReference type="GO" id="GO:0008855">
    <property type="term" value="F:exodeoxyribonuclease VII activity"/>
    <property type="evidence" value="ECO:0007669"/>
    <property type="project" value="UniProtKB-UniRule"/>
</dbReference>
<dbReference type="GO" id="GO:0003676">
    <property type="term" value="F:nucleic acid binding"/>
    <property type="evidence" value="ECO:0007669"/>
    <property type="project" value="InterPro"/>
</dbReference>
<dbReference type="GO" id="GO:0006308">
    <property type="term" value="P:DNA catabolic process"/>
    <property type="evidence" value="ECO:0007669"/>
    <property type="project" value="UniProtKB-UniRule"/>
</dbReference>
<dbReference type="CDD" id="cd04489">
    <property type="entry name" value="ExoVII_LU_OBF"/>
    <property type="match status" value="1"/>
</dbReference>
<dbReference type="Gene3D" id="2.40.50.1010">
    <property type="match status" value="1"/>
</dbReference>
<dbReference type="HAMAP" id="MF_00378">
    <property type="entry name" value="Exonuc_7_L"/>
    <property type="match status" value="1"/>
</dbReference>
<dbReference type="InterPro" id="IPR003753">
    <property type="entry name" value="Exonuc_VII_L"/>
</dbReference>
<dbReference type="InterPro" id="IPR020579">
    <property type="entry name" value="Exonuc_VII_lsu_C"/>
</dbReference>
<dbReference type="InterPro" id="IPR025824">
    <property type="entry name" value="OB-fold_nuc-bd_dom"/>
</dbReference>
<dbReference type="NCBIfam" id="TIGR00237">
    <property type="entry name" value="xseA"/>
    <property type="match status" value="1"/>
</dbReference>
<dbReference type="PANTHER" id="PTHR30008">
    <property type="entry name" value="EXODEOXYRIBONUCLEASE 7 LARGE SUBUNIT"/>
    <property type="match status" value="1"/>
</dbReference>
<dbReference type="PANTHER" id="PTHR30008:SF0">
    <property type="entry name" value="EXODEOXYRIBONUCLEASE 7 LARGE SUBUNIT"/>
    <property type="match status" value="1"/>
</dbReference>
<dbReference type="Pfam" id="PF02601">
    <property type="entry name" value="Exonuc_VII_L"/>
    <property type="match status" value="1"/>
</dbReference>
<dbReference type="Pfam" id="PF13742">
    <property type="entry name" value="tRNA_anti_2"/>
    <property type="match status" value="1"/>
</dbReference>
<name>EX7L_PSEFS</name>
<gene>
    <name evidence="1" type="primary">xseA</name>
    <name type="ordered locus">PFLU_5048</name>
</gene>
<proteinExistence type="inferred from homology"/>
<keyword id="KW-0963">Cytoplasm</keyword>
<keyword id="KW-0269">Exonuclease</keyword>
<keyword id="KW-0378">Hydrolase</keyword>
<keyword id="KW-0540">Nuclease</keyword>
<reference key="1">
    <citation type="journal article" date="2009" name="Genome Biol.">
        <title>Genomic and genetic analyses of diversity and plant interactions of Pseudomonas fluorescens.</title>
        <authorList>
            <person name="Silby M.W."/>
            <person name="Cerdeno-Tarraga A.M."/>
            <person name="Vernikos G.S."/>
            <person name="Giddens S.R."/>
            <person name="Jackson R.W."/>
            <person name="Preston G.M."/>
            <person name="Zhang X.-X."/>
            <person name="Moon C.D."/>
            <person name="Gehrig S.M."/>
            <person name="Godfrey S.A.C."/>
            <person name="Knight C.G."/>
            <person name="Malone J.G."/>
            <person name="Robinson Z."/>
            <person name="Spiers A.J."/>
            <person name="Harris S."/>
            <person name="Challis G.L."/>
            <person name="Yaxley A.M."/>
            <person name="Harris D."/>
            <person name="Seeger K."/>
            <person name="Murphy L."/>
            <person name="Rutter S."/>
            <person name="Squares R."/>
            <person name="Quail M.A."/>
            <person name="Saunders E."/>
            <person name="Mavromatis K."/>
            <person name="Brettin T.S."/>
            <person name="Bentley S.D."/>
            <person name="Hothersall J."/>
            <person name="Stephens E."/>
            <person name="Thomas C.M."/>
            <person name="Parkhill J."/>
            <person name="Levy S.B."/>
            <person name="Rainey P.B."/>
            <person name="Thomson N.R."/>
        </authorList>
    </citation>
    <scope>NUCLEOTIDE SEQUENCE [LARGE SCALE GENOMIC DNA]</scope>
    <source>
        <strain>SBW25</strain>
    </source>
</reference>